<name>GUC2B_PIG</name>
<gene>
    <name type="primary">GUCA2B</name>
</gene>
<protein>
    <recommendedName>
        <fullName>Guanylate cyclase activator 2B</fullName>
    </recommendedName>
    <component>
        <recommendedName>
            <fullName>Uroguanylin</fullName>
            <shortName>UGN</shortName>
        </recommendedName>
    </component>
</protein>
<accession>O13009</accession>
<dbReference type="EMBL" id="Z83746">
    <property type="protein sequence ID" value="CAB06042.1"/>
    <property type="molecule type" value="mRNA"/>
</dbReference>
<dbReference type="RefSeq" id="NP_001153747.1">
    <property type="nucleotide sequence ID" value="NM_001160275.1"/>
</dbReference>
<dbReference type="RefSeq" id="XP_020948924.1">
    <property type="nucleotide sequence ID" value="XM_021093265.1"/>
</dbReference>
<dbReference type="SMR" id="O13009"/>
<dbReference type="FunCoup" id="O13009">
    <property type="interactions" value="762"/>
</dbReference>
<dbReference type="STRING" id="9823.ENSSSCP00000004292"/>
<dbReference type="PaxDb" id="9823-ENSSSCP00000004292"/>
<dbReference type="Ensembl" id="ENSSSCT00000004392.4">
    <property type="protein sequence ID" value="ENSSSCP00000004292.3"/>
    <property type="gene ID" value="ENSSSCG00000003970.4"/>
</dbReference>
<dbReference type="Ensembl" id="ENSSSCT00085024081">
    <property type="protein sequence ID" value="ENSSSCP00085016517"/>
    <property type="gene ID" value="ENSSSCG00085012848"/>
</dbReference>
<dbReference type="Ensembl" id="ENSSSCT00090036307">
    <property type="protein sequence ID" value="ENSSSCP00090022596"/>
    <property type="gene ID" value="ENSSSCG00090020476"/>
</dbReference>
<dbReference type="Ensembl" id="ENSSSCT00105050835">
    <property type="protein sequence ID" value="ENSSSCP00105035776"/>
    <property type="gene ID" value="ENSSSCG00105026757"/>
</dbReference>
<dbReference type="Ensembl" id="ENSSSCT00110040328">
    <property type="protein sequence ID" value="ENSSSCP00110028104"/>
    <property type="gene ID" value="ENSSSCG00110020916"/>
</dbReference>
<dbReference type="Ensembl" id="ENSSSCT00115031793">
    <property type="protein sequence ID" value="ENSSSCP00115030225"/>
    <property type="gene ID" value="ENSSSCG00115017940"/>
</dbReference>
<dbReference type="GeneID" id="100301561"/>
<dbReference type="KEGG" id="ssc:100301561"/>
<dbReference type="CTD" id="2981"/>
<dbReference type="VGNC" id="VGNC:88748">
    <property type="gene designation" value="GUCA2B"/>
</dbReference>
<dbReference type="eggNOG" id="ENOG502S7QR">
    <property type="taxonomic scope" value="Eukaryota"/>
</dbReference>
<dbReference type="GeneTree" id="ENSGT00940000154436"/>
<dbReference type="HOGENOM" id="CLU_216147_0_0_1"/>
<dbReference type="InParanoid" id="O13009"/>
<dbReference type="OMA" id="ITPLDPC"/>
<dbReference type="OrthoDB" id="8936251at2759"/>
<dbReference type="Reactome" id="R-SSC-8935690">
    <property type="pathway name" value="Digestion"/>
</dbReference>
<dbReference type="Proteomes" id="UP000008227">
    <property type="component" value="Chromosome 6"/>
</dbReference>
<dbReference type="Proteomes" id="UP000314985">
    <property type="component" value="Unplaced"/>
</dbReference>
<dbReference type="Proteomes" id="UP000694570">
    <property type="component" value="Unplaced"/>
</dbReference>
<dbReference type="Proteomes" id="UP000694571">
    <property type="component" value="Unplaced"/>
</dbReference>
<dbReference type="Proteomes" id="UP000694720">
    <property type="component" value="Unplaced"/>
</dbReference>
<dbReference type="Proteomes" id="UP000694722">
    <property type="component" value="Unplaced"/>
</dbReference>
<dbReference type="Proteomes" id="UP000694723">
    <property type="component" value="Unplaced"/>
</dbReference>
<dbReference type="Proteomes" id="UP000694724">
    <property type="component" value="Unplaced"/>
</dbReference>
<dbReference type="Proteomes" id="UP000694725">
    <property type="component" value="Unplaced"/>
</dbReference>
<dbReference type="Proteomes" id="UP000694726">
    <property type="component" value="Unplaced"/>
</dbReference>
<dbReference type="Proteomes" id="UP000694727">
    <property type="component" value="Unplaced"/>
</dbReference>
<dbReference type="Proteomes" id="UP000694728">
    <property type="component" value="Unplaced"/>
</dbReference>
<dbReference type="Bgee" id="ENSSSCG00000003970">
    <property type="expression patterns" value="Expressed in colon and 14 other cell types or tissues"/>
</dbReference>
<dbReference type="GO" id="GO:0005576">
    <property type="term" value="C:extracellular region"/>
    <property type="evidence" value="ECO:0007669"/>
    <property type="project" value="UniProtKB-SubCell"/>
</dbReference>
<dbReference type="GO" id="GO:0030250">
    <property type="term" value="F:guanylate cyclase activator activity"/>
    <property type="evidence" value="ECO:0000318"/>
    <property type="project" value="GO_Central"/>
</dbReference>
<dbReference type="GO" id="GO:0060612">
    <property type="term" value="P:adipose tissue development"/>
    <property type="evidence" value="ECO:0007669"/>
    <property type="project" value="Ensembl"/>
</dbReference>
<dbReference type="GO" id="GO:0007589">
    <property type="term" value="P:body fluid secretion"/>
    <property type="evidence" value="ECO:0007669"/>
    <property type="project" value="Ensembl"/>
</dbReference>
<dbReference type="GO" id="GO:0042593">
    <property type="term" value="P:glucose homeostasis"/>
    <property type="evidence" value="ECO:0007669"/>
    <property type="project" value="Ensembl"/>
</dbReference>
<dbReference type="GO" id="GO:0035264">
    <property type="term" value="P:multicellular organism growth"/>
    <property type="evidence" value="ECO:0007669"/>
    <property type="project" value="Ensembl"/>
</dbReference>
<dbReference type="GO" id="GO:0045776">
    <property type="term" value="P:negative regulation of blood pressure"/>
    <property type="evidence" value="ECO:0007669"/>
    <property type="project" value="Ensembl"/>
</dbReference>
<dbReference type="GO" id="GO:0002023">
    <property type="term" value="P:reduction of food intake in response to dietary excess"/>
    <property type="evidence" value="ECO:0007669"/>
    <property type="project" value="Ensembl"/>
</dbReference>
<dbReference type="GO" id="GO:0070294">
    <property type="term" value="P:renal sodium ion absorption"/>
    <property type="evidence" value="ECO:0007669"/>
    <property type="project" value="Ensembl"/>
</dbReference>
<dbReference type="GO" id="GO:0009749">
    <property type="term" value="P:response to glucose"/>
    <property type="evidence" value="ECO:0007669"/>
    <property type="project" value="Ensembl"/>
</dbReference>
<dbReference type="FunFam" id="3.90.1450.10:FF:000001">
    <property type="entry name" value="Guanylate cyclase activator 2B"/>
    <property type="match status" value="1"/>
</dbReference>
<dbReference type="Gene3D" id="3.90.1450.10">
    <property type="entry name" value="Guanylin"/>
    <property type="match status" value="1"/>
</dbReference>
<dbReference type="InterPro" id="IPR000879">
    <property type="entry name" value="Guanylin"/>
</dbReference>
<dbReference type="InterPro" id="IPR036382">
    <property type="entry name" value="Guanylin_sf"/>
</dbReference>
<dbReference type="PANTHER" id="PTHR11318:SF4">
    <property type="entry name" value="GUANYLATE CYCLASE ACTIVATOR 2B"/>
    <property type="match status" value="1"/>
</dbReference>
<dbReference type="PANTHER" id="PTHR11318">
    <property type="entry name" value="GUANYLIN FAMILY MEMBER"/>
    <property type="match status" value="1"/>
</dbReference>
<dbReference type="Pfam" id="PF02058">
    <property type="entry name" value="Guanylin"/>
    <property type="match status" value="1"/>
</dbReference>
<dbReference type="PIRSF" id="PIRSF001849">
    <property type="entry name" value="Guanylin"/>
    <property type="match status" value="1"/>
</dbReference>
<dbReference type="PRINTS" id="PR00774">
    <property type="entry name" value="GUANYLIN"/>
</dbReference>
<dbReference type="SUPFAM" id="SSF89890">
    <property type="entry name" value="Proguanylin"/>
    <property type="match status" value="1"/>
</dbReference>
<sequence length="113" mass="12044">MASRAAAGLLLCGVALVFLVLLQGTQSVYIQYQGFRVQLKSVKKLSDLEGQWAPSPRLQAQSPQPSVCHHSALPPDLQPICQSEEAASIFQALRTIAGDDCELCVNVACTGCS</sequence>
<proteinExistence type="inferred from homology"/>
<comment type="function">
    <text evidence="1">Endogenous activator of intestinal guanylate cyclase. It stimulates this enzyme through the same receptor binding region as the heat-stable enterotoxins. May be a potent physiological regulator of intestinal fluid and electrolyte transport. May be an autocrine/paracrine regulator of intestinal salt and water transport (By similarity).</text>
</comment>
<comment type="subcellular location">
    <subcellularLocation>
        <location evidence="1">Secreted</location>
    </subcellularLocation>
</comment>
<comment type="similarity">
    <text evidence="3">Belongs to the guanylin family.</text>
</comment>
<reference key="1">
    <citation type="journal article" date="1999" name="Biochem. Biophys. Res. Commun.">
        <title>Porcine guanylin and uroguanylin: cDNA sequences, deduced amino acid sequences, and biological activity of the chemically synthesized peptides.</title>
        <authorList>
            <person name="Maegert H.-J."/>
            <person name="Hill O."/>
            <person name="Zucht H.-D."/>
            <person name="Martin S."/>
            <person name="Meyer M."/>
            <person name="Forssmann W.-G."/>
            <person name="Adermann K."/>
        </authorList>
    </citation>
    <scope>NUCLEOTIDE SEQUENCE [MRNA]</scope>
    <source>
        <tissue>Jejunum</tissue>
    </source>
</reference>
<organism>
    <name type="scientific">Sus scrofa</name>
    <name type="common">Pig</name>
    <dbReference type="NCBI Taxonomy" id="9823"/>
    <lineage>
        <taxon>Eukaryota</taxon>
        <taxon>Metazoa</taxon>
        <taxon>Chordata</taxon>
        <taxon>Craniata</taxon>
        <taxon>Vertebrata</taxon>
        <taxon>Euteleostomi</taxon>
        <taxon>Mammalia</taxon>
        <taxon>Eutheria</taxon>
        <taxon>Laurasiatheria</taxon>
        <taxon>Artiodactyla</taxon>
        <taxon>Suina</taxon>
        <taxon>Suidae</taxon>
        <taxon>Sus</taxon>
    </lineage>
</organism>
<evidence type="ECO:0000250" key="1"/>
<evidence type="ECO:0000255" key="2"/>
<evidence type="ECO:0000305" key="3"/>
<keyword id="KW-1015">Disulfide bond</keyword>
<keyword id="KW-1185">Reference proteome</keyword>
<keyword id="KW-0964">Secreted</keyword>
<keyword id="KW-0732">Signal</keyword>
<feature type="signal peptide" evidence="2">
    <location>
        <begin position="1"/>
        <end position="27"/>
    </location>
</feature>
<feature type="propeptide" id="PRO_0000013152">
    <location>
        <begin position="28"/>
        <end position="97"/>
    </location>
</feature>
<feature type="peptide" id="PRO_0000013153" description="Uroguanylin">
    <location>
        <begin position="98"/>
        <end position="113"/>
    </location>
</feature>
<feature type="disulfide bond" evidence="1">
    <location>
        <begin position="68"/>
        <end position="81"/>
    </location>
</feature>
<feature type="disulfide bond" evidence="1">
    <location>
        <begin position="101"/>
        <end position="109"/>
    </location>
</feature>
<feature type="disulfide bond" evidence="1">
    <location>
        <begin position="104"/>
        <end position="112"/>
    </location>
</feature>